<organism>
    <name type="scientific">Phytophthora infestans (strain T30-4)</name>
    <name type="common">Potato late blight agent</name>
    <dbReference type="NCBI Taxonomy" id="403677"/>
    <lineage>
        <taxon>Eukaryota</taxon>
        <taxon>Sar</taxon>
        <taxon>Stramenopiles</taxon>
        <taxon>Oomycota</taxon>
        <taxon>Peronosporales</taxon>
        <taxon>Peronosporaceae</taxon>
        <taxon>Phytophthora</taxon>
    </lineage>
</organism>
<dbReference type="EMBL" id="DS028146">
    <property type="protein sequence ID" value="EEY60877.1"/>
    <property type="molecule type" value="Genomic_DNA"/>
</dbReference>
<dbReference type="RefSeq" id="XP_002899823.1">
    <property type="nucleotide sequence ID" value="XM_002899777.1"/>
</dbReference>
<dbReference type="SMR" id="D0NMF6"/>
<dbReference type="STRING" id="403677.D0NMF6"/>
<dbReference type="EnsemblProtists" id="PITG_13628T0">
    <property type="protein sequence ID" value="PITG_13628T0"/>
    <property type="gene ID" value="PITG_13628"/>
</dbReference>
<dbReference type="GeneID" id="9462261"/>
<dbReference type="KEGG" id="pif:PITG_13628"/>
<dbReference type="VEuPathDB" id="FungiDB:PITG_13628"/>
<dbReference type="eggNOG" id="ENOG502RG9H">
    <property type="taxonomic scope" value="Eukaryota"/>
</dbReference>
<dbReference type="HOGENOM" id="CLU_1201884_0_0_1"/>
<dbReference type="InParanoid" id="D0NMF6"/>
<dbReference type="OMA" id="NAYAFEL"/>
<dbReference type="OrthoDB" id="129040at2759"/>
<dbReference type="PHI-base" id="PHI:4204"/>
<dbReference type="Proteomes" id="UP000006643">
    <property type="component" value="Partially assembled WGS sequence"/>
</dbReference>
<dbReference type="GO" id="GO:0005576">
    <property type="term" value="C:extracellular region"/>
    <property type="evidence" value="ECO:0007669"/>
    <property type="project" value="UniProtKB-SubCell"/>
</dbReference>
<dbReference type="GO" id="GO:0020002">
    <property type="term" value="C:host cell plasma membrane"/>
    <property type="evidence" value="ECO:0007669"/>
    <property type="project" value="UniProtKB-SubCell"/>
</dbReference>
<dbReference type="GO" id="GO:0016020">
    <property type="term" value="C:membrane"/>
    <property type="evidence" value="ECO:0007669"/>
    <property type="project" value="UniProtKB-KW"/>
</dbReference>
<dbReference type="Gene3D" id="1.10.10.2470">
    <property type="match status" value="1"/>
</dbReference>
<dbReference type="InterPro" id="IPR040691">
    <property type="entry name" value="PexRD2_WYL"/>
</dbReference>
<dbReference type="Pfam" id="PF18488">
    <property type="entry name" value="WYL_3"/>
    <property type="match status" value="1"/>
</dbReference>
<comment type="function">
    <text evidence="3">Effector that suppresses flg22-induced post-translational MAP kinase activation in tomato but not in Arabidopsis. The perception of highly conserved pathogen- or microbe-associated molecular patterns (PAMPs/MAMPs), such as flg22, triggers converging signaling pathways recruiting MAP kinase cascades and inducing transcriptional re-programming, yielding a generic antimicrobial response.</text>
</comment>
<comment type="subcellular location">
    <subcellularLocation>
        <location evidence="3">Secreted</location>
    </subcellularLocation>
    <subcellularLocation>
        <location evidence="3">Host cell membrane</location>
    </subcellularLocation>
</comment>
<comment type="induction">
    <text evidence="2">Expression is induced during host plant infection.</text>
</comment>
<comment type="domain">
    <text evidence="7">The RxLR-dEER motif acts to carry the protein into the host cell cytoplasm through binding to cell surface phosphatidylinositol-3-phosphate.</text>
</comment>
<comment type="similarity">
    <text evidence="6">Belongs to the RxLR effector family.</text>
</comment>
<reference key="1">
    <citation type="journal article" date="2009" name="Nature">
        <title>Genome sequence and analysis of the Irish potato famine pathogen Phytophthora infestans.</title>
        <authorList>
            <consortium name="The Broad Institute Genome Sequencing Platform"/>
            <person name="Haas B.J."/>
            <person name="Kamoun S."/>
            <person name="Zody M.C."/>
            <person name="Jiang R.H."/>
            <person name="Handsaker R.E."/>
            <person name="Cano L.M."/>
            <person name="Grabherr M."/>
            <person name="Kodira C.D."/>
            <person name="Raffaele S."/>
            <person name="Torto-Alalibo T."/>
            <person name="Bozkurt T.O."/>
            <person name="Ah-Fong A.M."/>
            <person name="Alvarado L."/>
            <person name="Anderson V.L."/>
            <person name="Armstrong M.R."/>
            <person name="Avrova A."/>
            <person name="Baxter L."/>
            <person name="Beynon J."/>
            <person name="Boevink P.C."/>
            <person name="Bollmann S.R."/>
            <person name="Bos J.I."/>
            <person name="Bulone V."/>
            <person name="Cai G."/>
            <person name="Cakir C."/>
            <person name="Carrington J.C."/>
            <person name="Chawner M."/>
            <person name="Conti L."/>
            <person name="Costanzo S."/>
            <person name="Ewan R."/>
            <person name="Fahlgren N."/>
            <person name="Fischbach M.A."/>
            <person name="Fugelstad J."/>
            <person name="Gilroy E.M."/>
            <person name="Gnerre S."/>
            <person name="Green P.J."/>
            <person name="Grenville-Briggs L.J."/>
            <person name="Griffith J."/>
            <person name="Grunwald N.J."/>
            <person name="Horn K."/>
            <person name="Horner N.R."/>
            <person name="Hu C.H."/>
            <person name="Huitema E."/>
            <person name="Jeong D.H."/>
            <person name="Jones A.M."/>
            <person name="Jones J.D."/>
            <person name="Jones R.W."/>
            <person name="Karlsson E.K."/>
            <person name="Kunjeti S.G."/>
            <person name="Lamour K."/>
            <person name="Liu Z."/>
            <person name="Ma L."/>
            <person name="Maclean D."/>
            <person name="Chibucos M.C."/>
            <person name="McDonald H."/>
            <person name="McWalters J."/>
            <person name="Meijer H.J."/>
            <person name="Morgan W."/>
            <person name="Morris P.F."/>
            <person name="Munro C.A."/>
            <person name="O'Neill K."/>
            <person name="Ospina-Giraldo M."/>
            <person name="Pinzon A."/>
            <person name="Pritchard L."/>
            <person name="Ramsahoye B."/>
            <person name="Ren Q."/>
            <person name="Restrepo S."/>
            <person name="Roy S."/>
            <person name="Sadanandom A."/>
            <person name="Savidor A."/>
            <person name="Schornack S."/>
            <person name="Schwartz D.C."/>
            <person name="Schumann U.D."/>
            <person name="Schwessinger B."/>
            <person name="Seyer L."/>
            <person name="Sharpe T."/>
            <person name="Silvar C."/>
            <person name="Song J."/>
            <person name="Studholme D.J."/>
            <person name="Sykes S."/>
            <person name="Thines M."/>
            <person name="van de Vondervoort P.J."/>
            <person name="Phuntumart V."/>
            <person name="Wawra S."/>
            <person name="Weide R."/>
            <person name="Win J."/>
            <person name="Young C."/>
            <person name="Zhou S."/>
            <person name="Fry W."/>
            <person name="Meyers B.C."/>
            <person name="van West P."/>
            <person name="Ristaino J."/>
            <person name="Govers F."/>
            <person name="Birch P.R."/>
            <person name="Whisson S.C."/>
            <person name="Judelson H.S."/>
            <person name="Nusbaum C."/>
        </authorList>
    </citation>
    <scope>NUCLEOTIDE SEQUENCE [LARGE SCALE GENOMIC DNA]</scope>
    <source>
        <strain>T30-4</strain>
    </source>
</reference>
<reference key="2">
    <citation type="journal article" date="2009" name="Plant Cell">
        <title>In planta expression screens of Phytophthora infestans RXLR effectors reveal diverse phenotypes, including activation of the Solanum bulbocastanum disease resistance protein Rpi-blb2.</title>
        <authorList>
            <person name="Oh S.K."/>
            <person name="Young C."/>
            <person name="Lee M."/>
            <person name="Oliva R."/>
            <person name="Bozkurt T.O."/>
            <person name="Cano L.M."/>
            <person name="Win J."/>
            <person name="Bos J.I."/>
            <person name="Liu H.Y."/>
            <person name="van Damme M."/>
            <person name="Morgan W."/>
            <person name="Choi D."/>
            <person name="Van der Vossen E.A."/>
            <person name="Vleeshouwers V.G."/>
            <person name="Kamoun S."/>
        </authorList>
    </citation>
    <scope>INDUCTION</scope>
</reference>
<reference key="3">
    <citation type="journal article" date="2014" name="PLoS Pathog.">
        <title>Functionally redundant RXLR effectors from Phytophthora infestans act at different steps to suppress early flg22-triggered immunity.</title>
        <authorList>
            <person name="Zheng X."/>
            <person name="McLellan H."/>
            <person name="Fraiture M."/>
            <person name="Liu X."/>
            <person name="Boevink P.C."/>
            <person name="Gilroy E.M."/>
            <person name="Chen Y."/>
            <person name="Kandel K."/>
            <person name="Sessa G."/>
            <person name="Birch P.R."/>
            <person name="Brunner F."/>
        </authorList>
    </citation>
    <scope>FUNCTION</scope>
    <scope>SUBCELLULAR LOCATION</scope>
</reference>
<reference key="4">
    <citation type="journal article" date="2018" name="New Phytol.">
        <title>Phytophthora infestans RXLR effector SFI5 requires association with calmodulin for PTI/MTI suppressing activity.</title>
        <authorList>
            <person name="Zheng X."/>
            <person name="Wagener N."/>
            <person name="McLellan H."/>
            <person name="Boevink P.C."/>
            <person name="Hua C."/>
            <person name="Birch P.R.J."/>
            <person name="Brunner F."/>
        </authorList>
    </citation>
    <scope>FUNCTION</scope>
    <scope>SUBCELLULAR LOCATION</scope>
    <scope>INTERACTION WITH CALMODULIN</scope>
</reference>
<protein>
    <recommendedName>
        <fullName evidence="5">RxLR effector protein SFI5</fullName>
    </recommendedName>
    <alternativeName>
        <fullName evidence="5">Suppressor of early Flg22-induced immune response 5</fullName>
    </alternativeName>
</protein>
<proteinExistence type="evidence at protein level"/>
<keyword id="KW-1032">Host cell membrane</keyword>
<keyword id="KW-1043">Host membrane</keyword>
<keyword id="KW-0472">Membrane</keyword>
<keyword id="KW-1185">Reference proteome</keyword>
<keyword id="KW-0964">Secreted</keyword>
<keyword id="KW-0732">Signal</keyword>
<keyword id="KW-0843">Virulence</keyword>
<sequence>MLRQARPLVVLIAVTFLVASEVFSMALASDQNSNVASITSQVQRLLRTHHATIKVNADSEERFLTEPPLTTDEMMAMMKAGKSKNAYAFELGIAGQMADFINSGLPDIETFKKTPEFQKYEFYMNFLNDMRKDDDYKPLVEMIKKNKGETEAFKTLLVKVEDSVSKKKASPSAIVKLDPLNREQAIVEKIELALKKNQALNKNKASLETIEHTVRMAAKSKPSTWKIFKIISRLKKLKLKR</sequence>
<gene>
    <name evidence="5" type="primary">SFI5</name>
    <name evidence="4" type="synonym">PexRD27</name>
    <name type="ORF">PITG_13628</name>
</gene>
<evidence type="ECO:0000255" key="1"/>
<evidence type="ECO:0000269" key="2">
    <source>
    </source>
</evidence>
<evidence type="ECO:0000269" key="3">
    <source>
    </source>
</evidence>
<evidence type="ECO:0000303" key="4">
    <source>
    </source>
</evidence>
<evidence type="ECO:0000303" key="5">
    <source>
    </source>
</evidence>
<evidence type="ECO:0000305" key="6"/>
<evidence type="ECO:0000305" key="7">
    <source>
    </source>
</evidence>
<name>SFI5_PHYIT</name>
<accession>D0NMF6</accession>
<feature type="signal peptide" evidence="1">
    <location>
        <begin position="1"/>
        <end position="20"/>
    </location>
</feature>
<feature type="chain" id="PRO_5003012222" description="RxLR effector protein SFI5">
    <location>
        <begin position="21"/>
        <end position="241"/>
    </location>
</feature>
<feature type="short sequence motif" description="RxLR-dEER" evidence="7">
    <location>
        <begin position="44"/>
        <end position="62"/>
    </location>
</feature>